<proteinExistence type="inferred from homology"/>
<dbReference type="EC" id="2.7.1.39" evidence="1"/>
<dbReference type="EMBL" id="CP000485">
    <property type="protein sequence ID" value="ABK85067.1"/>
    <property type="molecule type" value="Genomic_DNA"/>
</dbReference>
<dbReference type="RefSeq" id="WP_000612672.1">
    <property type="nucleotide sequence ID" value="NC_008600.1"/>
</dbReference>
<dbReference type="SMR" id="A0RCX4"/>
<dbReference type="KEGG" id="btl:BALH_1743"/>
<dbReference type="HOGENOM" id="CLU_041243_0_0_9"/>
<dbReference type="UniPathway" id="UPA00050">
    <property type="reaction ID" value="UER00064"/>
</dbReference>
<dbReference type="GO" id="GO:0005737">
    <property type="term" value="C:cytoplasm"/>
    <property type="evidence" value="ECO:0007669"/>
    <property type="project" value="UniProtKB-SubCell"/>
</dbReference>
<dbReference type="GO" id="GO:0005524">
    <property type="term" value="F:ATP binding"/>
    <property type="evidence" value="ECO:0007669"/>
    <property type="project" value="UniProtKB-UniRule"/>
</dbReference>
<dbReference type="GO" id="GO:0004413">
    <property type="term" value="F:homoserine kinase activity"/>
    <property type="evidence" value="ECO:0007669"/>
    <property type="project" value="UniProtKB-UniRule"/>
</dbReference>
<dbReference type="GO" id="GO:0009088">
    <property type="term" value="P:threonine biosynthetic process"/>
    <property type="evidence" value="ECO:0007669"/>
    <property type="project" value="UniProtKB-UniRule"/>
</dbReference>
<dbReference type="Gene3D" id="3.30.230.10">
    <property type="match status" value="1"/>
</dbReference>
<dbReference type="Gene3D" id="3.30.70.890">
    <property type="entry name" value="GHMP kinase, C-terminal domain"/>
    <property type="match status" value="1"/>
</dbReference>
<dbReference type="HAMAP" id="MF_00384">
    <property type="entry name" value="Homoser_kinase"/>
    <property type="match status" value="1"/>
</dbReference>
<dbReference type="InterPro" id="IPR013750">
    <property type="entry name" value="GHMP_kinase_C_dom"/>
</dbReference>
<dbReference type="InterPro" id="IPR036554">
    <property type="entry name" value="GHMP_kinase_C_sf"/>
</dbReference>
<dbReference type="InterPro" id="IPR006204">
    <property type="entry name" value="GHMP_kinase_N_dom"/>
</dbReference>
<dbReference type="InterPro" id="IPR006203">
    <property type="entry name" value="GHMP_knse_ATP-bd_CS"/>
</dbReference>
<dbReference type="InterPro" id="IPR000870">
    <property type="entry name" value="Homoserine_kinase"/>
</dbReference>
<dbReference type="InterPro" id="IPR020568">
    <property type="entry name" value="Ribosomal_Su5_D2-typ_SF"/>
</dbReference>
<dbReference type="InterPro" id="IPR014721">
    <property type="entry name" value="Ribsml_uS5_D2-typ_fold_subgr"/>
</dbReference>
<dbReference type="NCBIfam" id="TIGR00191">
    <property type="entry name" value="thrB"/>
    <property type="match status" value="1"/>
</dbReference>
<dbReference type="PANTHER" id="PTHR20861:SF1">
    <property type="entry name" value="HOMOSERINE KINASE"/>
    <property type="match status" value="1"/>
</dbReference>
<dbReference type="PANTHER" id="PTHR20861">
    <property type="entry name" value="HOMOSERINE/4-DIPHOSPHOCYTIDYL-2-C-METHYL-D-ERYTHRITOL KINASE"/>
    <property type="match status" value="1"/>
</dbReference>
<dbReference type="Pfam" id="PF08544">
    <property type="entry name" value="GHMP_kinases_C"/>
    <property type="match status" value="1"/>
</dbReference>
<dbReference type="Pfam" id="PF00288">
    <property type="entry name" value="GHMP_kinases_N"/>
    <property type="match status" value="1"/>
</dbReference>
<dbReference type="PIRSF" id="PIRSF000676">
    <property type="entry name" value="Homoser_kin"/>
    <property type="match status" value="1"/>
</dbReference>
<dbReference type="PRINTS" id="PR00958">
    <property type="entry name" value="HOMSERKINASE"/>
</dbReference>
<dbReference type="SUPFAM" id="SSF55060">
    <property type="entry name" value="GHMP Kinase, C-terminal domain"/>
    <property type="match status" value="1"/>
</dbReference>
<dbReference type="SUPFAM" id="SSF54211">
    <property type="entry name" value="Ribosomal protein S5 domain 2-like"/>
    <property type="match status" value="1"/>
</dbReference>
<dbReference type="PROSITE" id="PS00627">
    <property type="entry name" value="GHMP_KINASES_ATP"/>
    <property type="match status" value="1"/>
</dbReference>
<feature type="chain" id="PRO_1000049108" description="Homoserine kinase">
    <location>
        <begin position="1"/>
        <end position="297"/>
    </location>
</feature>
<feature type="binding site" evidence="1">
    <location>
        <begin position="82"/>
        <end position="92"/>
    </location>
    <ligand>
        <name>ATP</name>
        <dbReference type="ChEBI" id="CHEBI:30616"/>
    </ligand>
</feature>
<accession>A0RCX4</accession>
<comment type="function">
    <text evidence="1">Catalyzes the ATP-dependent phosphorylation of L-homoserine to L-homoserine phosphate.</text>
</comment>
<comment type="catalytic activity">
    <reaction evidence="1">
        <text>L-homoserine + ATP = O-phospho-L-homoserine + ADP + H(+)</text>
        <dbReference type="Rhea" id="RHEA:13985"/>
        <dbReference type="ChEBI" id="CHEBI:15378"/>
        <dbReference type="ChEBI" id="CHEBI:30616"/>
        <dbReference type="ChEBI" id="CHEBI:57476"/>
        <dbReference type="ChEBI" id="CHEBI:57590"/>
        <dbReference type="ChEBI" id="CHEBI:456216"/>
        <dbReference type="EC" id="2.7.1.39"/>
    </reaction>
</comment>
<comment type="pathway">
    <text evidence="1">Amino-acid biosynthesis; L-threonine biosynthesis; L-threonine from L-aspartate: step 4/5.</text>
</comment>
<comment type="subcellular location">
    <subcellularLocation>
        <location evidence="1">Cytoplasm</location>
    </subcellularLocation>
</comment>
<comment type="similarity">
    <text evidence="1">Belongs to the GHMP kinase family. Homoserine kinase subfamily.</text>
</comment>
<organism>
    <name type="scientific">Bacillus thuringiensis (strain Al Hakam)</name>
    <dbReference type="NCBI Taxonomy" id="412694"/>
    <lineage>
        <taxon>Bacteria</taxon>
        <taxon>Bacillati</taxon>
        <taxon>Bacillota</taxon>
        <taxon>Bacilli</taxon>
        <taxon>Bacillales</taxon>
        <taxon>Bacillaceae</taxon>
        <taxon>Bacillus</taxon>
        <taxon>Bacillus cereus group</taxon>
    </lineage>
</organism>
<keyword id="KW-0028">Amino-acid biosynthesis</keyword>
<keyword id="KW-0067">ATP-binding</keyword>
<keyword id="KW-0963">Cytoplasm</keyword>
<keyword id="KW-0418">Kinase</keyword>
<keyword id="KW-0547">Nucleotide-binding</keyword>
<keyword id="KW-0791">Threonine biosynthesis</keyword>
<keyword id="KW-0808">Transferase</keyword>
<sequence>MIPLSIRVPASTANVGPGFDSVGIALSLYLHVVVKEKSDKWQVIHSFEDSIPTDDKNLIVSTACKVCPSLSPHIIEVTSNIPLTRGLGSSASAIVAGIELANQLGKLNLTTDQKVQIATNFEGHPDNVAASILGGTVIGALDGKNVSVVRIESKELGVISLIPNEELNTDESRSVLPDVFPFHEAVKASAISNVLVAALCQKKWEVVGEMMEMDHFHEPYRLELVPLLPSIRKCAKEFGAYGTALSGAGPSIFILTPYEKRQEIAEQLARVFTSMKVCELEIDHRGITVNKKEHIGL</sequence>
<reference key="1">
    <citation type="journal article" date="2007" name="J. Bacteriol.">
        <title>The complete genome sequence of Bacillus thuringiensis Al Hakam.</title>
        <authorList>
            <person name="Challacombe J.F."/>
            <person name="Altherr M.R."/>
            <person name="Xie G."/>
            <person name="Bhotika S.S."/>
            <person name="Brown N."/>
            <person name="Bruce D."/>
            <person name="Campbell C.S."/>
            <person name="Campbell M.L."/>
            <person name="Chen J."/>
            <person name="Chertkov O."/>
            <person name="Cleland C."/>
            <person name="Dimitrijevic M."/>
            <person name="Doggett N.A."/>
            <person name="Fawcett J.J."/>
            <person name="Glavina T."/>
            <person name="Goodwin L.A."/>
            <person name="Green L.D."/>
            <person name="Han C.S."/>
            <person name="Hill K.K."/>
            <person name="Hitchcock P."/>
            <person name="Jackson P.J."/>
            <person name="Keim P."/>
            <person name="Kewalramani A.R."/>
            <person name="Longmire J."/>
            <person name="Lucas S."/>
            <person name="Malfatti S."/>
            <person name="Martinez D."/>
            <person name="McMurry K."/>
            <person name="Meincke L.J."/>
            <person name="Misra M."/>
            <person name="Moseman B.L."/>
            <person name="Mundt M."/>
            <person name="Munk A.C."/>
            <person name="Okinaka R.T."/>
            <person name="Parson-Quintana B."/>
            <person name="Reilly L.P."/>
            <person name="Richardson P."/>
            <person name="Robinson D.L."/>
            <person name="Saunders E."/>
            <person name="Tapia R."/>
            <person name="Tesmer J.G."/>
            <person name="Thayer N."/>
            <person name="Thompson L.S."/>
            <person name="Tice H."/>
            <person name="Ticknor L.O."/>
            <person name="Wills P.L."/>
            <person name="Gilna P."/>
            <person name="Brettin T.S."/>
        </authorList>
    </citation>
    <scope>NUCLEOTIDE SEQUENCE [LARGE SCALE GENOMIC DNA]</scope>
    <source>
        <strain>Al Hakam</strain>
    </source>
</reference>
<evidence type="ECO:0000255" key="1">
    <source>
        <dbReference type="HAMAP-Rule" id="MF_00384"/>
    </source>
</evidence>
<protein>
    <recommendedName>
        <fullName evidence="1">Homoserine kinase</fullName>
        <shortName evidence="1">HK</shortName>
        <shortName evidence="1">HSK</shortName>
        <ecNumber evidence="1">2.7.1.39</ecNumber>
    </recommendedName>
</protein>
<name>KHSE_BACAH</name>
<gene>
    <name evidence="1" type="primary">thrB</name>
    <name type="ordered locus">BALH_1743</name>
</gene>